<evidence type="ECO:0000255" key="1">
    <source>
        <dbReference type="HAMAP-Rule" id="MF_01520"/>
    </source>
</evidence>
<keyword id="KW-0414">Isoprene biosynthesis</keyword>
<keyword id="KW-0456">Lyase</keyword>
<keyword id="KW-0479">Metal-binding</keyword>
<keyword id="KW-0511">Multifunctional enzyme</keyword>
<keyword id="KW-0548">Nucleotidyltransferase</keyword>
<keyword id="KW-1185">Reference proteome</keyword>
<keyword id="KW-0808">Transferase</keyword>
<gene>
    <name evidence="1" type="primary">ispDF</name>
    <name type="ordered locus">Cla_0245</name>
</gene>
<accession>B9KEX3</accession>
<sequence>MLDISLIMLSAGESSRFNAPVKKQFLRLGEQPLWLYATKNLSSFYPFKQIVVTSGNISYMKKFAPEYKFVQGGATRAQSLLNALSMVESEYVLVSDVARVLISKNLFNNIIENHDKADCITPVLKVSDTTIYAQEAIDRDKIKLIQTPQLSRTSMLKKALEQSSNFTDDSTAIQAIGGKIWYVQGDELAKKITFKEDLKSLNLPKPSWDIFNGNGFDVHEFGEQRALLLGGVKVHENMGLKAHSDGDVLAHALIDALLGAAGLGDIGELFPDNDMQYKNADSMLLLQNAYTLVQNYGFELVNADITIIAQTPKMKEFKEAIAFNIAKTLKTTPNKINIKATTTEHLGFVGRKEGIAVLTSVNLKYFDWMKL</sequence>
<name>ISPDF_CAMLR</name>
<proteinExistence type="inferred from homology"/>
<comment type="function">
    <text evidence="1">Bifunctional enzyme that catalyzes the formation of 4-diphosphocytidyl-2-C-methyl-D-erythritol from CTP and 2-C-methyl-D-erythritol 4-phosphate (MEP) (IspD), and catalyzes the conversion of 4-diphosphocytidyl-2-C-methyl-D-erythritol 2-phosphate (CDP-ME2P) to 2-C-methyl-D-erythritol 2,4-cyclodiphosphate (ME-CPP) with a corresponding release of cytidine 5-monophosphate (CMP) (IspF).</text>
</comment>
<comment type="catalytic activity">
    <reaction evidence="1">
        <text>2-C-methyl-D-erythritol 4-phosphate + CTP + H(+) = 4-CDP-2-C-methyl-D-erythritol + diphosphate</text>
        <dbReference type="Rhea" id="RHEA:13429"/>
        <dbReference type="ChEBI" id="CHEBI:15378"/>
        <dbReference type="ChEBI" id="CHEBI:33019"/>
        <dbReference type="ChEBI" id="CHEBI:37563"/>
        <dbReference type="ChEBI" id="CHEBI:57823"/>
        <dbReference type="ChEBI" id="CHEBI:58262"/>
        <dbReference type="EC" id="2.7.7.60"/>
    </reaction>
</comment>
<comment type="catalytic activity">
    <reaction evidence="1">
        <text>4-CDP-2-C-methyl-D-erythritol 2-phosphate = 2-C-methyl-D-erythritol 2,4-cyclic diphosphate + CMP</text>
        <dbReference type="Rhea" id="RHEA:23864"/>
        <dbReference type="ChEBI" id="CHEBI:57919"/>
        <dbReference type="ChEBI" id="CHEBI:58483"/>
        <dbReference type="ChEBI" id="CHEBI:60377"/>
        <dbReference type="EC" id="4.6.1.12"/>
    </reaction>
</comment>
<comment type="cofactor">
    <cofactor evidence="1">
        <name>a divalent metal cation</name>
        <dbReference type="ChEBI" id="CHEBI:60240"/>
    </cofactor>
</comment>
<comment type="pathway">
    <text evidence="1">Isoprenoid biosynthesis; isopentenyl diphosphate biosynthesis via DXP pathway; isopentenyl diphosphate from 1-deoxy-D-xylulose 5-phosphate: step 2/6.</text>
</comment>
<comment type="pathway">
    <text evidence="1">Isoprenoid biosynthesis; isopentenyl diphosphate biosynthesis via DXP pathway; isopentenyl diphosphate from 1-deoxy-D-xylulose 5-phosphate: step 4/6.</text>
</comment>
<comment type="similarity">
    <text evidence="1">In the N-terminal section; belongs to the IspD/TarI cytidylyltransferase family. IspD subfamily.</text>
</comment>
<comment type="similarity">
    <text evidence="1">In the C-terminal section; belongs to the IspF family.</text>
</comment>
<reference key="1">
    <citation type="journal article" date="2008" name="Foodborne Pathog. Dis.">
        <title>The complete genome sequence and analysis of the human pathogen Campylobacter lari.</title>
        <authorList>
            <person name="Miller W.G."/>
            <person name="Wang G."/>
            <person name="Binnewies T.T."/>
            <person name="Parker C.T."/>
        </authorList>
    </citation>
    <scope>NUCLEOTIDE SEQUENCE [LARGE SCALE GENOMIC DNA]</scope>
    <source>
        <strain>RM2100 / D67 / ATCC BAA-1060</strain>
    </source>
</reference>
<dbReference type="EC" id="2.7.7.60" evidence="1"/>
<dbReference type="EC" id="4.6.1.12" evidence="1"/>
<dbReference type="EMBL" id="CP000932">
    <property type="protein sequence ID" value="ACM63608.1"/>
    <property type="molecule type" value="Genomic_DNA"/>
</dbReference>
<dbReference type="RefSeq" id="WP_012660992.1">
    <property type="nucleotide sequence ID" value="NC_012039.1"/>
</dbReference>
<dbReference type="SMR" id="B9KEX3"/>
<dbReference type="STRING" id="306263.Cla_0245"/>
<dbReference type="KEGG" id="cla:CLA_0245"/>
<dbReference type="PATRIC" id="fig|306263.5.peg.243"/>
<dbReference type="eggNOG" id="COG0245">
    <property type="taxonomic scope" value="Bacteria"/>
</dbReference>
<dbReference type="eggNOG" id="COG1211">
    <property type="taxonomic scope" value="Bacteria"/>
</dbReference>
<dbReference type="HOGENOM" id="CLU_042800_2_6_7"/>
<dbReference type="UniPathway" id="UPA00056">
    <property type="reaction ID" value="UER00093"/>
</dbReference>
<dbReference type="UniPathway" id="UPA00056">
    <property type="reaction ID" value="UER00095"/>
</dbReference>
<dbReference type="Proteomes" id="UP000007727">
    <property type="component" value="Chromosome"/>
</dbReference>
<dbReference type="GO" id="GO:0008685">
    <property type="term" value="F:2-C-methyl-D-erythritol 2,4-cyclodiphosphate synthase activity"/>
    <property type="evidence" value="ECO:0007669"/>
    <property type="project" value="UniProtKB-UniRule"/>
</dbReference>
<dbReference type="GO" id="GO:0050518">
    <property type="term" value="F:2-C-methyl-D-erythritol 4-phosphate cytidylyltransferase activity"/>
    <property type="evidence" value="ECO:0007669"/>
    <property type="project" value="UniProtKB-UniRule"/>
</dbReference>
<dbReference type="GO" id="GO:0046872">
    <property type="term" value="F:metal ion binding"/>
    <property type="evidence" value="ECO:0007669"/>
    <property type="project" value="UniProtKB-KW"/>
</dbReference>
<dbReference type="GO" id="GO:0019288">
    <property type="term" value="P:isopentenyl diphosphate biosynthetic process, methylerythritol 4-phosphate pathway"/>
    <property type="evidence" value="ECO:0007669"/>
    <property type="project" value="UniProtKB-UniRule"/>
</dbReference>
<dbReference type="GO" id="GO:0016114">
    <property type="term" value="P:terpenoid biosynthetic process"/>
    <property type="evidence" value="ECO:0007669"/>
    <property type="project" value="InterPro"/>
</dbReference>
<dbReference type="CDD" id="cd02516">
    <property type="entry name" value="CDP-ME_synthetase"/>
    <property type="match status" value="1"/>
</dbReference>
<dbReference type="CDD" id="cd00554">
    <property type="entry name" value="MECDP_synthase"/>
    <property type="match status" value="1"/>
</dbReference>
<dbReference type="Gene3D" id="3.30.1330.50">
    <property type="entry name" value="2-C-methyl-D-erythritol 2,4-cyclodiphosphate synthase"/>
    <property type="match status" value="1"/>
</dbReference>
<dbReference type="Gene3D" id="3.90.550.10">
    <property type="entry name" value="Spore Coat Polysaccharide Biosynthesis Protein SpsA, Chain A"/>
    <property type="match status" value="1"/>
</dbReference>
<dbReference type="HAMAP" id="MF_01520">
    <property type="entry name" value="IspDF"/>
    <property type="match status" value="1"/>
</dbReference>
<dbReference type="HAMAP" id="MF_00107">
    <property type="entry name" value="IspF"/>
    <property type="match status" value="1"/>
</dbReference>
<dbReference type="InterPro" id="IPR001228">
    <property type="entry name" value="IspD"/>
</dbReference>
<dbReference type="InterPro" id="IPR026596">
    <property type="entry name" value="IspD/F"/>
</dbReference>
<dbReference type="InterPro" id="IPR034683">
    <property type="entry name" value="IspD/TarI"/>
</dbReference>
<dbReference type="InterPro" id="IPR018294">
    <property type="entry name" value="ISPD_synthase_CS"/>
</dbReference>
<dbReference type="InterPro" id="IPR003526">
    <property type="entry name" value="MECDP_synthase"/>
</dbReference>
<dbReference type="InterPro" id="IPR020555">
    <property type="entry name" value="MECDP_synthase_CS"/>
</dbReference>
<dbReference type="InterPro" id="IPR036571">
    <property type="entry name" value="MECDP_synthase_sf"/>
</dbReference>
<dbReference type="InterPro" id="IPR029044">
    <property type="entry name" value="Nucleotide-diphossugar_trans"/>
</dbReference>
<dbReference type="NCBIfam" id="TIGR00453">
    <property type="entry name" value="ispD"/>
    <property type="match status" value="1"/>
</dbReference>
<dbReference type="NCBIfam" id="TIGR00151">
    <property type="entry name" value="ispF"/>
    <property type="match status" value="1"/>
</dbReference>
<dbReference type="NCBIfam" id="NF006899">
    <property type="entry name" value="PRK09382.1"/>
    <property type="match status" value="1"/>
</dbReference>
<dbReference type="PANTHER" id="PTHR43181">
    <property type="entry name" value="2-C-METHYL-D-ERYTHRITOL 2,4-CYCLODIPHOSPHATE SYNTHASE, CHLOROPLASTIC"/>
    <property type="match status" value="1"/>
</dbReference>
<dbReference type="PANTHER" id="PTHR43181:SF1">
    <property type="entry name" value="2-C-METHYL-D-ERYTHRITOL 2,4-CYCLODIPHOSPHATE SYNTHASE, CHLOROPLASTIC"/>
    <property type="match status" value="1"/>
</dbReference>
<dbReference type="Pfam" id="PF01128">
    <property type="entry name" value="IspD"/>
    <property type="match status" value="1"/>
</dbReference>
<dbReference type="Pfam" id="PF02542">
    <property type="entry name" value="YgbB"/>
    <property type="match status" value="1"/>
</dbReference>
<dbReference type="SUPFAM" id="SSF69765">
    <property type="entry name" value="IpsF-like"/>
    <property type="match status" value="1"/>
</dbReference>
<dbReference type="SUPFAM" id="SSF53448">
    <property type="entry name" value="Nucleotide-diphospho-sugar transferases"/>
    <property type="match status" value="1"/>
</dbReference>
<dbReference type="PROSITE" id="PS01295">
    <property type="entry name" value="ISPD"/>
    <property type="match status" value="1"/>
</dbReference>
<dbReference type="PROSITE" id="PS01350">
    <property type="entry name" value="ISPF"/>
    <property type="match status" value="1"/>
</dbReference>
<organism>
    <name type="scientific">Campylobacter lari (strain RM2100 / D67 / ATCC BAA-1060)</name>
    <dbReference type="NCBI Taxonomy" id="306263"/>
    <lineage>
        <taxon>Bacteria</taxon>
        <taxon>Pseudomonadati</taxon>
        <taxon>Campylobacterota</taxon>
        <taxon>Epsilonproteobacteria</taxon>
        <taxon>Campylobacterales</taxon>
        <taxon>Campylobacteraceae</taxon>
        <taxon>Campylobacter</taxon>
    </lineage>
</organism>
<protein>
    <recommendedName>
        <fullName evidence="1">Bifunctional enzyme IspD/IspF</fullName>
    </recommendedName>
    <domain>
        <recommendedName>
            <fullName evidence="1">2-C-methyl-D-erythritol 4-phosphate cytidylyltransferase</fullName>
            <ecNumber evidence="1">2.7.7.60</ecNumber>
        </recommendedName>
        <alternativeName>
            <fullName evidence="1">4-diphosphocytidyl-2C-methyl-D-erythritol synthase</fullName>
        </alternativeName>
        <alternativeName>
            <fullName evidence="1">MEP cytidylyltransferase</fullName>
            <shortName evidence="1">MCT</shortName>
        </alternativeName>
    </domain>
    <domain>
        <recommendedName>
            <fullName evidence="1">2-C-methyl-D-erythritol 2,4-cyclodiphosphate synthase</fullName>
            <shortName evidence="1">MECDP-synthase</shortName>
            <shortName evidence="1">MECPP-synthase</shortName>
            <shortName evidence="1">MECPS</shortName>
            <ecNumber evidence="1">4.6.1.12</ecNumber>
        </recommendedName>
    </domain>
</protein>
<feature type="chain" id="PRO_1000185098" description="Bifunctional enzyme IspD/IspF">
    <location>
        <begin position="1"/>
        <end position="371"/>
    </location>
</feature>
<feature type="region of interest" description="2-C-methyl-D-erythritol 4-phosphate cytidylyltransferase" evidence="1">
    <location>
        <begin position="1"/>
        <end position="210"/>
    </location>
</feature>
<feature type="region of interest" description="2-C-methyl-D-erythritol 2,4-cyclodiphosphate synthase" evidence="1">
    <location>
        <begin position="211"/>
        <end position="371"/>
    </location>
</feature>
<feature type="binding site" evidence="1">
    <location>
        <begin position="217"/>
        <end position="219"/>
    </location>
    <ligand>
        <name>4-CDP-2-C-methyl-D-erythritol 2-phosphate</name>
        <dbReference type="ChEBI" id="CHEBI:57919"/>
    </ligand>
</feature>
<feature type="binding site" evidence="1">
    <location>
        <position position="217"/>
    </location>
    <ligand>
        <name>a divalent metal cation</name>
        <dbReference type="ChEBI" id="CHEBI:60240"/>
    </ligand>
</feature>
<feature type="binding site" evidence="1">
    <location>
        <position position="219"/>
    </location>
    <ligand>
        <name>a divalent metal cation</name>
        <dbReference type="ChEBI" id="CHEBI:60240"/>
    </ligand>
</feature>
<feature type="binding site" evidence="1">
    <location>
        <begin position="243"/>
        <end position="244"/>
    </location>
    <ligand>
        <name>4-CDP-2-C-methyl-D-erythritol 2-phosphate</name>
        <dbReference type="ChEBI" id="CHEBI:57919"/>
    </ligand>
</feature>
<feature type="binding site" evidence="1">
    <location>
        <position position="251"/>
    </location>
    <ligand>
        <name>a divalent metal cation</name>
        <dbReference type="ChEBI" id="CHEBI:60240"/>
    </ligand>
</feature>
<feature type="binding site" evidence="1">
    <location>
        <begin position="265"/>
        <end position="267"/>
    </location>
    <ligand>
        <name>4-CDP-2-C-methyl-D-erythritol 2-phosphate</name>
        <dbReference type="ChEBI" id="CHEBI:57919"/>
    </ligand>
</feature>
<feature type="binding site" evidence="1">
    <location>
        <begin position="270"/>
        <end position="274"/>
    </location>
    <ligand>
        <name>4-CDP-2-C-methyl-D-erythritol 2-phosphate</name>
        <dbReference type="ChEBI" id="CHEBI:57919"/>
    </ligand>
</feature>
<feature type="binding site" evidence="1">
    <location>
        <begin position="341"/>
        <end position="344"/>
    </location>
    <ligand>
        <name>4-CDP-2-C-methyl-D-erythritol 2-phosphate</name>
        <dbReference type="ChEBI" id="CHEBI:57919"/>
    </ligand>
</feature>
<feature type="binding site" evidence="1">
    <location>
        <position position="348"/>
    </location>
    <ligand>
        <name>4-CDP-2-C-methyl-D-erythritol 2-phosphate</name>
        <dbReference type="ChEBI" id="CHEBI:57919"/>
    </ligand>
</feature>
<feature type="binding site" evidence="1">
    <location>
        <position position="351"/>
    </location>
    <ligand>
        <name>4-CDP-2-C-methyl-D-erythritol 2-phosphate</name>
        <dbReference type="ChEBI" id="CHEBI:57919"/>
    </ligand>
</feature>
<feature type="site" description="Transition state stabilizer" evidence="1">
    <location>
        <position position="16"/>
    </location>
</feature>
<feature type="site" description="Transition state stabilizer" evidence="1">
    <location>
        <position position="23"/>
    </location>
</feature>
<feature type="site" description="Positions MEP for the nucleophilic attack" evidence="1">
    <location>
        <position position="139"/>
    </location>
</feature>
<feature type="site" description="Positions MEP for the nucleophilic attack" evidence="1">
    <location>
        <position position="191"/>
    </location>
</feature>
<feature type="site" description="Transition state stabilizer" evidence="1">
    <location>
        <position position="243"/>
    </location>
</feature>
<feature type="site" description="Transition state stabilizer" evidence="1">
    <location>
        <position position="342"/>
    </location>
</feature>